<dbReference type="EMBL" id="CP000247">
    <property type="protein sequence ID" value="ABG69054.1"/>
    <property type="molecule type" value="Genomic_DNA"/>
</dbReference>
<dbReference type="RefSeq" id="WP_001300662.1">
    <property type="nucleotide sequence ID" value="NC_008253.1"/>
</dbReference>
<dbReference type="SMR" id="Q0TJ25"/>
<dbReference type="GeneID" id="93776366"/>
<dbReference type="KEGG" id="ecp:ECP_1041"/>
<dbReference type="HOGENOM" id="CLU_023403_2_0_6"/>
<dbReference type="UniPathway" id="UPA00637"/>
<dbReference type="Proteomes" id="UP000009182">
    <property type="component" value="Chromosome"/>
</dbReference>
<dbReference type="GO" id="GO:0030288">
    <property type="term" value="C:outer membrane-bounded periplasmic space"/>
    <property type="evidence" value="ECO:0007669"/>
    <property type="project" value="TreeGrafter"/>
</dbReference>
<dbReference type="GO" id="GO:0030246">
    <property type="term" value="F:carbohydrate binding"/>
    <property type="evidence" value="ECO:0007669"/>
    <property type="project" value="InterPro"/>
</dbReference>
<dbReference type="GO" id="GO:0003824">
    <property type="term" value="F:catalytic activity"/>
    <property type="evidence" value="ECO:0007669"/>
    <property type="project" value="InterPro"/>
</dbReference>
<dbReference type="GO" id="GO:0051274">
    <property type="term" value="P:beta-glucan biosynthetic process"/>
    <property type="evidence" value="ECO:0007669"/>
    <property type="project" value="TreeGrafter"/>
</dbReference>
<dbReference type="FunFam" id="2.60.40.10:FF:000294">
    <property type="entry name" value="Glucans biosynthesis protein G"/>
    <property type="match status" value="1"/>
</dbReference>
<dbReference type="FunFam" id="2.70.98.10:FF:000001">
    <property type="entry name" value="Glucans biosynthesis protein G"/>
    <property type="match status" value="1"/>
</dbReference>
<dbReference type="Gene3D" id="2.70.98.10">
    <property type="match status" value="1"/>
</dbReference>
<dbReference type="Gene3D" id="2.60.40.10">
    <property type="entry name" value="Immunoglobulins"/>
    <property type="match status" value="1"/>
</dbReference>
<dbReference type="HAMAP" id="MF_01069">
    <property type="entry name" value="MdoG_OpgG"/>
    <property type="match status" value="1"/>
</dbReference>
<dbReference type="InterPro" id="IPR011013">
    <property type="entry name" value="Gal_mutarotase_sf_dom"/>
</dbReference>
<dbReference type="InterPro" id="IPR014718">
    <property type="entry name" value="GH-type_carb-bd"/>
</dbReference>
<dbReference type="InterPro" id="IPR014438">
    <property type="entry name" value="Glucan_biosyn_MdoG/MdoD"/>
</dbReference>
<dbReference type="InterPro" id="IPR007444">
    <property type="entry name" value="Glucan_biosyn_MdoG_C"/>
</dbReference>
<dbReference type="InterPro" id="IPR013783">
    <property type="entry name" value="Ig-like_fold"/>
</dbReference>
<dbReference type="InterPro" id="IPR014756">
    <property type="entry name" value="Ig_E-set"/>
</dbReference>
<dbReference type="InterPro" id="IPR023704">
    <property type="entry name" value="MdoG_OpgG"/>
</dbReference>
<dbReference type="PANTHER" id="PTHR30504">
    <property type="entry name" value="GLUCANS BIOSYNTHESIS PROTEIN"/>
    <property type="match status" value="1"/>
</dbReference>
<dbReference type="PANTHER" id="PTHR30504:SF4">
    <property type="entry name" value="GLUCANS BIOSYNTHESIS PROTEIN G"/>
    <property type="match status" value="1"/>
</dbReference>
<dbReference type="Pfam" id="PF04349">
    <property type="entry name" value="MdoG"/>
    <property type="match status" value="1"/>
</dbReference>
<dbReference type="PIRSF" id="PIRSF006281">
    <property type="entry name" value="MdoG"/>
    <property type="match status" value="1"/>
</dbReference>
<dbReference type="SUPFAM" id="SSF81296">
    <property type="entry name" value="E set domains"/>
    <property type="match status" value="1"/>
</dbReference>
<dbReference type="SUPFAM" id="SSF74650">
    <property type="entry name" value="Galactose mutarotase-like"/>
    <property type="match status" value="1"/>
</dbReference>
<comment type="function">
    <text evidence="1">Involved in the biosynthesis of osmoregulated periplasmic glucans (OPGs).</text>
</comment>
<comment type="pathway">
    <text evidence="1">Glycan metabolism; osmoregulated periplasmic glucan (OPG) biosynthesis.</text>
</comment>
<comment type="subcellular location">
    <subcellularLocation>
        <location evidence="1">Periplasm</location>
    </subcellularLocation>
</comment>
<comment type="similarity">
    <text evidence="1">Belongs to the OpgD/OpgG family.</text>
</comment>
<proteinExistence type="inferred from homology"/>
<accession>Q0TJ25</accession>
<organism>
    <name type="scientific">Escherichia coli O6:K15:H31 (strain 536 / UPEC)</name>
    <dbReference type="NCBI Taxonomy" id="362663"/>
    <lineage>
        <taxon>Bacteria</taxon>
        <taxon>Pseudomonadati</taxon>
        <taxon>Pseudomonadota</taxon>
        <taxon>Gammaproteobacteria</taxon>
        <taxon>Enterobacterales</taxon>
        <taxon>Enterobacteriaceae</taxon>
        <taxon>Escherichia</taxon>
    </lineage>
</organism>
<name>OPGG_ECOL5</name>
<gene>
    <name evidence="1" type="primary">mdoG</name>
    <name evidence="1" type="synonym">opgG</name>
    <name type="ordered locus">ECP_1041</name>
</gene>
<protein>
    <recommendedName>
        <fullName evidence="1">Glucans biosynthesis protein G</fullName>
    </recommendedName>
</protein>
<reference key="1">
    <citation type="journal article" date="2006" name="Mol. Microbiol.">
        <title>Role of pathogenicity island-associated integrases in the genome plasticity of uropathogenic Escherichia coli strain 536.</title>
        <authorList>
            <person name="Hochhut B."/>
            <person name="Wilde C."/>
            <person name="Balling G."/>
            <person name="Middendorf B."/>
            <person name="Dobrindt U."/>
            <person name="Brzuszkiewicz E."/>
            <person name="Gottschalk G."/>
            <person name="Carniel E."/>
            <person name="Hacker J."/>
        </authorList>
    </citation>
    <scope>NUCLEOTIDE SEQUENCE [LARGE SCALE GENOMIC DNA]</scope>
    <source>
        <strain>536 / UPEC</strain>
    </source>
</reference>
<keyword id="KW-0574">Periplasm</keyword>
<keyword id="KW-0732">Signal</keyword>
<sequence>MMKMRWLSAAVMLTLYTSSSWAFSIDDVAKQAQSLAGKGYEAPKSNLPSVFRDMKYADYQQIQFNHDKAYWNNLKTPFKLEFYHQGMYFDTPVKINEVTATAVKRIKYSPDYFTFGDVQHDKDTVKDLGFAGFKVLYPINSKDKNDEIVSMLGASYFRVIGAGQVYGLSARGLAIDTALPSGEEFPRFKEFWIERPKPTDKRLTIYALLDSPRATGAYKFVVMPGRDTVVDVQSKIYLRDKVGKLGVAPLTSMFLFGPNQPSPANNYRPELHDSNGLSIHAGNGEWIWRPLNNPKHLAVSSFSMENPQGFGLLQRGRDFSRFEDLDDRYDLRPSAWVTPKGEWGKGSVELVEIPTNDETNDNIVAYWTPDQLPEPGKEMNFKYTITFSRDEDKLHAPDNAWVQQTRRSTGDVKQSNLIRQPDGTIAFVVDFTGAEMKKLPEDTPVTAQTSIGDNGEIVESTVRYNPVTKGWRLVMRVKVKDAKKTTEMRAALVNADQTLSETWSYQLPANE</sequence>
<feature type="signal peptide" evidence="1">
    <location>
        <begin position="1"/>
        <end position="22"/>
    </location>
</feature>
<feature type="chain" id="PRO_1000064559" description="Glucans biosynthesis protein G">
    <location>
        <begin position="23"/>
        <end position="511"/>
    </location>
</feature>
<evidence type="ECO:0000255" key="1">
    <source>
        <dbReference type="HAMAP-Rule" id="MF_01069"/>
    </source>
</evidence>